<dbReference type="EMBL" id="AM406671">
    <property type="protein sequence ID" value="CAL97451.1"/>
    <property type="molecule type" value="Genomic_DNA"/>
</dbReference>
<dbReference type="RefSeq" id="WP_011834821.1">
    <property type="nucleotide sequence ID" value="NC_009004.1"/>
</dbReference>
<dbReference type="SMR" id="A2RJJ9"/>
<dbReference type="STRING" id="416870.llmg_0856"/>
<dbReference type="TCDB" id="2.A.1.3.37">
    <property type="family name" value="the major facilitator superfamily (mfs)"/>
</dbReference>
<dbReference type="KEGG" id="llm:llmg_0856"/>
<dbReference type="eggNOG" id="COG0477">
    <property type="taxonomic scope" value="Bacteria"/>
</dbReference>
<dbReference type="HOGENOM" id="CLU_000960_34_2_9"/>
<dbReference type="OrthoDB" id="9816041at2"/>
<dbReference type="PhylomeDB" id="A2RJJ9"/>
<dbReference type="Proteomes" id="UP000000364">
    <property type="component" value="Chromosome"/>
</dbReference>
<dbReference type="GO" id="GO:0005886">
    <property type="term" value="C:plasma membrane"/>
    <property type="evidence" value="ECO:0007669"/>
    <property type="project" value="UniProtKB-SubCell"/>
</dbReference>
<dbReference type="GO" id="GO:0022857">
    <property type="term" value="F:transmembrane transporter activity"/>
    <property type="evidence" value="ECO:0007669"/>
    <property type="project" value="InterPro"/>
</dbReference>
<dbReference type="CDD" id="cd17504">
    <property type="entry name" value="MFS_MMR_MDR_like"/>
    <property type="match status" value="1"/>
</dbReference>
<dbReference type="Gene3D" id="1.20.1250.20">
    <property type="entry name" value="MFS general substrate transporter like domains"/>
    <property type="match status" value="2"/>
</dbReference>
<dbReference type="InterPro" id="IPR011701">
    <property type="entry name" value="MFS"/>
</dbReference>
<dbReference type="InterPro" id="IPR020846">
    <property type="entry name" value="MFS_dom"/>
</dbReference>
<dbReference type="InterPro" id="IPR036259">
    <property type="entry name" value="MFS_trans_sf"/>
</dbReference>
<dbReference type="PANTHER" id="PTHR42718">
    <property type="entry name" value="MAJOR FACILITATOR SUPERFAMILY MULTIDRUG TRANSPORTER MFSC"/>
    <property type="match status" value="1"/>
</dbReference>
<dbReference type="PANTHER" id="PTHR42718:SF9">
    <property type="entry name" value="MAJOR FACILITATOR SUPERFAMILY MULTIDRUG TRANSPORTER MFSC"/>
    <property type="match status" value="1"/>
</dbReference>
<dbReference type="Pfam" id="PF07690">
    <property type="entry name" value="MFS_1"/>
    <property type="match status" value="1"/>
</dbReference>
<dbReference type="SUPFAM" id="SSF103473">
    <property type="entry name" value="MFS general substrate transporter"/>
    <property type="match status" value="1"/>
</dbReference>
<dbReference type="PROSITE" id="PS50850">
    <property type="entry name" value="MFS"/>
    <property type="match status" value="1"/>
</dbReference>
<reference key="1">
    <citation type="journal article" date="2007" name="J. Bacteriol.">
        <title>The complete genome sequence of the lactic acid bacterial paradigm Lactococcus lactis subsp. cremoris MG1363.</title>
        <authorList>
            <person name="Wegmann U."/>
            <person name="O'Connell-Motherway M."/>
            <person name="Zomer A."/>
            <person name="Buist G."/>
            <person name="Shearman C."/>
            <person name="Canchaya C."/>
            <person name="Ventura M."/>
            <person name="Goesmann A."/>
            <person name="Gasson M.J."/>
            <person name="Kuipers O.P."/>
            <person name="van Sinderen D."/>
            <person name="Kok J."/>
        </authorList>
    </citation>
    <scope>NUCLEOTIDE SEQUENCE [LARGE SCALE GENOMIC DNA]</scope>
    <source>
        <strain>MG1363</strain>
    </source>
</reference>
<reference key="2">
    <citation type="journal article" date="2010" name="Microbiology">
        <title>Two nucleoside transporters in Lactococcus lactis with different substrate specificities.</title>
        <authorList>
            <person name="Martinussen J."/>
            <person name="Soerensen C."/>
            <person name="Jendresen C.B."/>
            <person name="Kilstrup M."/>
        </authorList>
    </citation>
    <scope>FUNCTION AS A TRANSPORTER</scope>
    <scope>DISRUPTION PHENOTYPE</scope>
    <source>
        <strain>MG1363</strain>
    </source>
</reference>
<feature type="chain" id="PRO_0000449268" description="Uridine/deoxyuridine transporter">
    <location>
        <begin position="1"/>
        <end position="480"/>
    </location>
</feature>
<feature type="transmembrane region" description="Helical" evidence="1">
    <location>
        <begin position="14"/>
        <end position="34"/>
    </location>
</feature>
<feature type="transmembrane region" description="Helical" evidence="1">
    <location>
        <begin position="55"/>
        <end position="75"/>
    </location>
</feature>
<feature type="transmembrane region" description="Helical" evidence="1">
    <location>
        <begin position="93"/>
        <end position="113"/>
    </location>
</feature>
<feature type="transmembrane region" description="Helical" evidence="1">
    <location>
        <begin position="115"/>
        <end position="135"/>
    </location>
</feature>
<feature type="transmembrane region" description="Helical" evidence="1">
    <location>
        <begin position="147"/>
        <end position="167"/>
    </location>
</feature>
<feature type="transmembrane region" description="Helical" evidence="1">
    <location>
        <begin position="174"/>
        <end position="194"/>
    </location>
</feature>
<feature type="transmembrane region" description="Helical" evidence="1">
    <location>
        <begin position="207"/>
        <end position="227"/>
    </location>
</feature>
<feature type="transmembrane region" description="Helical" evidence="1">
    <location>
        <begin position="239"/>
        <end position="259"/>
    </location>
</feature>
<feature type="transmembrane region" description="Helical" evidence="1">
    <location>
        <begin position="280"/>
        <end position="300"/>
    </location>
</feature>
<feature type="transmembrane region" description="Helical" evidence="1">
    <location>
        <begin position="320"/>
        <end position="340"/>
    </location>
</feature>
<feature type="transmembrane region" description="Helical" evidence="1">
    <location>
        <begin position="358"/>
        <end position="378"/>
    </location>
</feature>
<feature type="transmembrane region" description="Helical" evidence="1">
    <location>
        <begin position="382"/>
        <end position="402"/>
    </location>
</feature>
<feature type="transmembrane region" description="Helical" evidence="1">
    <location>
        <begin position="417"/>
        <end position="437"/>
    </location>
</feature>
<feature type="transmembrane region" description="Helical" evidence="1">
    <location>
        <begin position="449"/>
        <end position="469"/>
    </location>
</feature>
<gene>
    <name evidence="3" type="primary">uriP</name>
    <name evidence="5" type="ordered locus">llmg_0856</name>
</gene>
<accession>A2RJJ9</accession>
<protein>
    <recommendedName>
        <fullName evidence="4">Uridine/deoxyuridine transporter</fullName>
    </recommendedName>
</protein>
<name>URIP_LACLM</name>
<organism>
    <name type="scientific">Lactococcus lactis subsp. cremoris (strain MG1363)</name>
    <dbReference type="NCBI Taxonomy" id="416870"/>
    <lineage>
        <taxon>Bacteria</taxon>
        <taxon>Bacillati</taxon>
        <taxon>Bacillota</taxon>
        <taxon>Bacilli</taxon>
        <taxon>Lactobacillales</taxon>
        <taxon>Streptococcaceae</taxon>
        <taxon>Lactococcus</taxon>
        <taxon>Lactococcus cremoris subsp. cremoris</taxon>
    </lineage>
</organism>
<keyword id="KW-1003">Cell membrane</keyword>
<keyword id="KW-0472">Membrane</keyword>
<keyword id="KW-0812">Transmembrane</keyword>
<keyword id="KW-1133">Transmembrane helix</keyword>
<keyword id="KW-0813">Transport</keyword>
<proteinExistence type="evidence at protein level"/>
<comment type="function">
    <text evidence="2">Responsible for the uptake of uridine and deoxyuridine. Not involved in purine nucleoside uptake.</text>
</comment>
<comment type="subcellular location">
    <subcellularLocation>
        <location evidence="4">Cell membrane</location>
        <topology evidence="1">Multi-pass membrane protein</topology>
    </subcellularLocation>
</comment>
<comment type="disruption phenotype">
    <text evidence="2">Mutant shows slower uptake of uridine. The double mutant uriP-nupA is impaired in uridine transport.</text>
</comment>
<comment type="similarity">
    <text evidence="4">Belongs to the major facilitator superfamily. EmrB family.</text>
</comment>
<sequence length="480" mass="50377">MGENTVPQKSSDNVGSIVALMVALLVAIFAFQLNASMLSPALVTMQAQLHTTASSIALTQTIFFTAAALFALFLPRLADLIGRKKVLIGMLTLTMIGCLISGFATNVGILMIGRILQGAAGPVVPLCLIILHVKVRDEKRYAKLMAILTSINGGIAGVDALAGGWLVSHGGFRSVFFVMGITAALAILLVSFGTQESTAKDTPKMDWTGVILLVVAMGALLSAVNALQGSFGNLGLPNWLLASILALLGLICFVGFWQVEKRVNHPMVPIHYLKQRRTWGLLITTLLTMTGVFAIMNGIIPALGQDGKFGLGLGADMVSLVTLTPYALAGLFFGPVSGFLAARFGFAKVLRVGLLTTIIGIVLAVAGVLQPSIWLLLLVSTFIGITYAGITNIMLNGLGIVLSPEDNPGYLPGLNAGMFNLGAGLSFIILYAVPTVLHTSVGGSSSGYISGIVTGLILVIIAFFTSFLIPDSKDCKINLE</sequence>
<evidence type="ECO:0000255" key="1"/>
<evidence type="ECO:0000269" key="2">
    <source>
    </source>
</evidence>
<evidence type="ECO:0000303" key="3">
    <source>
    </source>
</evidence>
<evidence type="ECO:0000305" key="4"/>
<evidence type="ECO:0000312" key="5">
    <source>
        <dbReference type="EMBL" id="CAL97451.1"/>
    </source>
</evidence>